<organism>
    <name type="scientific">Bordetella parapertussis (strain 12822 / ATCC BAA-587 / NCTC 13253)</name>
    <dbReference type="NCBI Taxonomy" id="257311"/>
    <lineage>
        <taxon>Bacteria</taxon>
        <taxon>Pseudomonadati</taxon>
        <taxon>Pseudomonadota</taxon>
        <taxon>Betaproteobacteria</taxon>
        <taxon>Burkholderiales</taxon>
        <taxon>Alcaligenaceae</taxon>
        <taxon>Bordetella</taxon>
    </lineage>
</organism>
<gene>
    <name type="primary">bioF</name>
    <name type="ordered locus">BPP1775</name>
</gene>
<proteinExistence type="inferred from homology"/>
<sequence>MSKLDSLFTAALEQAAQRQVRRRLRRATAAPPGRLALDGRTLVNFSSNDYLGLARHPLLAERASLWATRHGAGAQASRLVCGNLDLHEQVEAKLARLKGTEAALLLASGWQANAAVLPALFKAAAAQGEPQVYTDRLNHASLHHGCQAAGVRQIRFRHNDLAHLEHLLAERAGAPGARFIVTESVFSMDGDRADVPALAALAARHHTFLYLDEAHATGVLGPRGMGLAGLAPGGVDLAMGTFSKGLGSFGAYVAGSRALCDYLVNACSGFIYTTALPPAVLGAIDAALDLVPRLDQARAALLGHGERLRASLAAQGIDCGASSTQIVPAIVGDAGHALALAAELERRGLLAVAIRPPTVPAGTSRLRIALSAAHGETELDQLIEALAAGWRAVRQAA</sequence>
<feature type="chain" id="PRO_0000380924" description="Putative 8-amino-7-oxononanoate synthase">
    <location>
        <begin position="1"/>
        <end position="397"/>
    </location>
</feature>
<feature type="binding site" evidence="1">
    <location>
        <position position="22"/>
    </location>
    <ligand>
        <name>substrate</name>
    </ligand>
</feature>
<feature type="binding site" evidence="1">
    <location>
        <begin position="109"/>
        <end position="110"/>
    </location>
    <ligand>
        <name>pyridoxal 5'-phosphate</name>
        <dbReference type="ChEBI" id="CHEBI:597326"/>
    </ligand>
</feature>
<feature type="binding site" evidence="1">
    <location>
        <position position="139"/>
    </location>
    <ligand>
        <name>substrate</name>
    </ligand>
</feature>
<feature type="binding site" evidence="1">
    <location>
        <position position="187"/>
    </location>
    <ligand>
        <name>pyridoxal 5'-phosphate</name>
        <dbReference type="ChEBI" id="CHEBI:597326"/>
    </ligand>
</feature>
<feature type="binding site" evidence="1">
    <location>
        <begin position="212"/>
        <end position="215"/>
    </location>
    <ligand>
        <name>pyridoxal 5'-phosphate</name>
        <dbReference type="ChEBI" id="CHEBI:597326"/>
    </ligand>
</feature>
<feature type="binding site" evidence="1">
    <location>
        <begin position="241"/>
        <end position="244"/>
    </location>
    <ligand>
        <name>pyridoxal 5'-phosphate</name>
        <dbReference type="ChEBI" id="CHEBI:597326"/>
    </ligand>
</feature>
<feature type="binding site" evidence="1">
    <location>
        <position position="358"/>
    </location>
    <ligand>
        <name>substrate</name>
    </ligand>
</feature>
<feature type="modified residue" description="N6-(pyridoxal phosphate)lysine" evidence="1">
    <location>
        <position position="244"/>
    </location>
</feature>
<accession>Q7W9I4</accession>
<reference key="1">
    <citation type="journal article" date="2003" name="Nat. Genet.">
        <title>Comparative analysis of the genome sequences of Bordetella pertussis, Bordetella parapertussis and Bordetella bronchiseptica.</title>
        <authorList>
            <person name="Parkhill J."/>
            <person name="Sebaihia M."/>
            <person name="Preston A."/>
            <person name="Murphy L.D."/>
            <person name="Thomson N.R."/>
            <person name="Harris D.E."/>
            <person name="Holden M.T.G."/>
            <person name="Churcher C.M."/>
            <person name="Bentley S.D."/>
            <person name="Mungall K.L."/>
            <person name="Cerdeno-Tarraga A.-M."/>
            <person name="Temple L."/>
            <person name="James K.D."/>
            <person name="Harris B."/>
            <person name="Quail M.A."/>
            <person name="Achtman M."/>
            <person name="Atkin R."/>
            <person name="Baker S."/>
            <person name="Basham D."/>
            <person name="Bason N."/>
            <person name="Cherevach I."/>
            <person name="Chillingworth T."/>
            <person name="Collins M."/>
            <person name="Cronin A."/>
            <person name="Davis P."/>
            <person name="Doggett J."/>
            <person name="Feltwell T."/>
            <person name="Goble A."/>
            <person name="Hamlin N."/>
            <person name="Hauser H."/>
            <person name="Holroyd S."/>
            <person name="Jagels K."/>
            <person name="Leather S."/>
            <person name="Moule S."/>
            <person name="Norberczak H."/>
            <person name="O'Neil S."/>
            <person name="Ormond D."/>
            <person name="Price C."/>
            <person name="Rabbinowitsch E."/>
            <person name="Rutter S."/>
            <person name="Sanders M."/>
            <person name="Saunders D."/>
            <person name="Seeger K."/>
            <person name="Sharp S."/>
            <person name="Simmonds M."/>
            <person name="Skelton J."/>
            <person name="Squares R."/>
            <person name="Squares S."/>
            <person name="Stevens K."/>
            <person name="Unwin L."/>
            <person name="Whitehead S."/>
            <person name="Barrell B.G."/>
            <person name="Maskell D.J."/>
        </authorList>
    </citation>
    <scope>NUCLEOTIDE SEQUENCE [LARGE SCALE GENOMIC DNA]</scope>
    <source>
        <strain>12822 / ATCC BAA-587 / NCTC 13253</strain>
    </source>
</reference>
<name>BIOF_BORPA</name>
<comment type="function">
    <text evidence="1">Catalyzes the decarboxylative condensation of pimeloyl-[acyl-carrier protein] and L-alanine to produce 8-amino-7-oxononanoate (AON), [acyl-carrier protein], and carbon dioxide.</text>
</comment>
<comment type="catalytic activity">
    <reaction>
        <text>6-carboxyhexanoyl-[ACP] + L-alanine + H(+) = (8S)-8-amino-7-oxononanoate + holo-[ACP] + CO2</text>
        <dbReference type="Rhea" id="RHEA:42288"/>
        <dbReference type="Rhea" id="RHEA-COMP:9685"/>
        <dbReference type="Rhea" id="RHEA-COMP:9955"/>
        <dbReference type="ChEBI" id="CHEBI:15378"/>
        <dbReference type="ChEBI" id="CHEBI:16526"/>
        <dbReference type="ChEBI" id="CHEBI:57972"/>
        <dbReference type="ChEBI" id="CHEBI:64479"/>
        <dbReference type="ChEBI" id="CHEBI:78846"/>
        <dbReference type="ChEBI" id="CHEBI:149468"/>
        <dbReference type="EC" id="2.3.1.47"/>
    </reaction>
</comment>
<comment type="cofactor">
    <cofactor evidence="1">
        <name>pyridoxal 5'-phosphate</name>
        <dbReference type="ChEBI" id="CHEBI:597326"/>
    </cofactor>
</comment>
<comment type="pathway">
    <text>Cofactor biosynthesis; biotin biosynthesis.</text>
</comment>
<comment type="subunit">
    <text evidence="1">Homodimer.</text>
</comment>
<comment type="similarity">
    <text evidence="2">Belongs to the class-II pyridoxal-phosphate-dependent aminotransferase family. BioF subfamily.</text>
</comment>
<keyword id="KW-0093">Biotin biosynthesis</keyword>
<keyword id="KW-0663">Pyridoxal phosphate</keyword>
<keyword id="KW-0808">Transferase</keyword>
<dbReference type="EC" id="2.3.1.47"/>
<dbReference type="EMBL" id="BX640428">
    <property type="protein sequence ID" value="CAE37076.1"/>
    <property type="molecule type" value="Genomic_DNA"/>
</dbReference>
<dbReference type="RefSeq" id="WP_010928201.1">
    <property type="nucleotide sequence ID" value="NC_002928.3"/>
</dbReference>
<dbReference type="SMR" id="Q7W9I4"/>
<dbReference type="GeneID" id="93203539"/>
<dbReference type="KEGG" id="bpa:BPP1775"/>
<dbReference type="HOGENOM" id="CLU_015846_11_2_4"/>
<dbReference type="UniPathway" id="UPA00078"/>
<dbReference type="Proteomes" id="UP000001421">
    <property type="component" value="Chromosome"/>
</dbReference>
<dbReference type="GO" id="GO:0008710">
    <property type="term" value="F:8-amino-7-oxononanoate synthase activity"/>
    <property type="evidence" value="ECO:0007669"/>
    <property type="project" value="UniProtKB-EC"/>
</dbReference>
<dbReference type="GO" id="GO:0030170">
    <property type="term" value="F:pyridoxal phosphate binding"/>
    <property type="evidence" value="ECO:0007669"/>
    <property type="project" value="InterPro"/>
</dbReference>
<dbReference type="GO" id="GO:0009102">
    <property type="term" value="P:biotin biosynthetic process"/>
    <property type="evidence" value="ECO:0007669"/>
    <property type="project" value="UniProtKB-UniPathway"/>
</dbReference>
<dbReference type="Gene3D" id="3.90.1150.10">
    <property type="entry name" value="Aspartate Aminotransferase, domain 1"/>
    <property type="match status" value="1"/>
</dbReference>
<dbReference type="Gene3D" id="3.40.640.10">
    <property type="entry name" value="Type I PLP-dependent aspartate aminotransferase-like (Major domain)"/>
    <property type="match status" value="1"/>
</dbReference>
<dbReference type="InterPro" id="IPR001917">
    <property type="entry name" value="Aminotrans_II_pyridoxalP_BS"/>
</dbReference>
<dbReference type="InterPro" id="IPR004839">
    <property type="entry name" value="Aminotransferase_I/II_large"/>
</dbReference>
<dbReference type="InterPro" id="IPR050087">
    <property type="entry name" value="AON_synthase_class-II"/>
</dbReference>
<dbReference type="InterPro" id="IPR004723">
    <property type="entry name" value="AONS_Archaea/Proteobacteria"/>
</dbReference>
<dbReference type="InterPro" id="IPR015424">
    <property type="entry name" value="PyrdxlP-dep_Trfase"/>
</dbReference>
<dbReference type="InterPro" id="IPR015421">
    <property type="entry name" value="PyrdxlP-dep_Trfase_major"/>
</dbReference>
<dbReference type="InterPro" id="IPR015422">
    <property type="entry name" value="PyrdxlP-dep_Trfase_small"/>
</dbReference>
<dbReference type="NCBIfam" id="TIGR00858">
    <property type="entry name" value="bioF"/>
    <property type="match status" value="1"/>
</dbReference>
<dbReference type="PANTHER" id="PTHR13693:SF100">
    <property type="entry name" value="8-AMINO-7-OXONONANOATE SYNTHASE"/>
    <property type="match status" value="1"/>
</dbReference>
<dbReference type="PANTHER" id="PTHR13693">
    <property type="entry name" value="CLASS II AMINOTRANSFERASE/8-AMINO-7-OXONONANOATE SYNTHASE"/>
    <property type="match status" value="1"/>
</dbReference>
<dbReference type="Pfam" id="PF00155">
    <property type="entry name" value="Aminotran_1_2"/>
    <property type="match status" value="1"/>
</dbReference>
<dbReference type="SUPFAM" id="SSF53383">
    <property type="entry name" value="PLP-dependent transferases"/>
    <property type="match status" value="1"/>
</dbReference>
<dbReference type="PROSITE" id="PS00599">
    <property type="entry name" value="AA_TRANSFER_CLASS_2"/>
    <property type="match status" value="1"/>
</dbReference>
<evidence type="ECO:0000250" key="1"/>
<evidence type="ECO:0000305" key="2"/>
<protein>
    <recommendedName>
        <fullName>Putative 8-amino-7-oxononanoate synthase</fullName>
        <shortName>AONS</shortName>
        <ecNumber>2.3.1.47</ecNumber>
    </recommendedName>
    <alternativeName>
        <fullName>7-keto-8-amino-pelargonic acid synthase</fullName>
        <shortName>7-KAP synthase</shortName>
    </alternativeName>
    <alternativeName>
        <fullName>8-amino-7-ketopelargonate synthase</fullName>
    </alternativeName>
</protein>